<name>MOT4_MOUSE</name>
<evidence type="ECO:0000250" key="1">
    <source>
        <dbReference type="UniProtKB" id="O15427"/>
    </source>
</evidence>
<evidence type="ECO:0000255" key="2"/>
<evidence type="ECO:0000269" key="3">
    <source>
    </source>
</evidence>
<evidence type="ECO:0000305" key="4"/>
<evidence type="ECO:0000305" key="5">
    <source>
    </source>
</evidence>
<evidence type="ECO:0007744" key="6">
    <source>
    </source>
</evidence>
<organism>
    <name type="scientific">Mus musculus</name>
    <name type="common">Mouse</name>
    <dbReference type="NCBI Taxonomy" id="10090"/>
    <lineage>
        <taxon>Eukaryota</taxon>
        <taxon>Metazoa</taxon>
        <taxon>Chordata</taxon>
        <taxon>Craniata</taxon>
        <taxon>Vertebrata</taxon>
        <taxon>Euteleostomi</taxon>
        <taxon>Mammalia</taxon>
        <taxon>Eutheria</taxon>
        <taxon>Euarchontoglires</taxon>
        <taxon>Glires</taxon>
        <taxon>Rodentia</taxon>
        <taxon>Myomorpha</taxon>
        <taxon>Muroidea</taxon>
        <taxon>Muridae</taxon>
        <taxon>Murinae</taxon>
        <taxon>Mus</taxon>
        <taxon>Mus</taxon>
    </lineage>
</organism>
<proteinExistence type="evidence at protein level"/>
<protein>
    <recommendedName>
        <fullName>Monocarboxylate transporter 4</fullName>
        <shortName>MCT 4</shortName>
    </recommendedName>
    <alternativeName>
        <fullName>Solute carrier family 16 member 3</fullName>
    </alternativeName>
</protein>
<dbReference type="EMBL" id="AF178954">
    <property type="protein sequence ID" value="AAG24271.1"/>
    <property type="molecule type" value="mRNA"/>
</dbReference>
<dbReference type="EMBL" id="AF204397">
    <property type="protein sequence ID" value="AAF67525.1"/>
    <property type="molecule type" value="Genomic_DNA"/>
</dbReference>
<dbReference type="EMBL" id="BC046525">
    <property type="protein sequence ID" value="AAH46525.1"/>
    <property type="molecule type" value="mRNA"/>
</dbReference>
<dbReference type="CCDS" id="CCDS25761.1"/>
<dbReference type="RefSeq" id="NP_001033742.1">
    <property type="nucleotide sequence ID" value="NM_001038653.1"/>
</dbReference>
<dbReference type="RefSeq" id="NP_001033743.1">
    <property type="nucleotide sequence ID" value="NM_001038654.1"/>
</dbReference>
<dbReference type="RefSeq" id="NP_109621.1">
    <property type="nucleotide sequence ID" value="NM_030696.3"/>
</dbReference>
<dbReference type="RefSeq" id="XP_011247623.1">
    <property type="nucleotide sequence ID" value="XM_011249321.3"/>
</dbReference>
<dbReference type="RefSeq" id="XP_011247624.1">
    <property type="nucleotide sequence ID" value="XM_011249322.4"/>
</dbReference>
<dbReference type="RefSeq" id="XP_036013000.1">
    <property type="nucleotide sequence ID" value="XM_036157107.1"/>
</dbReference>
<dbReference type="SMR" id="P57787"/>
<dbReference type="BioGRID" id="219825">
    <property type="interactions" value="3"/>
</dbReference>
<dbReference type="FunCoup" id="P57787">
    <property type="interactions" value="25"/>
</dbReference>
<dbReference type="STRING" id="10090.ENSMUSP00000125846"/>
<dbReference type="BindingDB" id="P57787"/>
<dbReference type="ChEMBL" id="CHEMBL4802065"/>
<dbReference type="iPTMnet" id="P57787"/>
<dbReference type="PhosphoSitePlus" id="P57787"/>
<dbReference type="SwissPalm" id="P57787"/>
<dbReference type="jPOST" id="P57787"/>
<dbReference type="PaxDb" id="10090-ENSMUSP00000068854"/>
<dbReference type="PeptideAtlas" id="P57787"/>
<dbReference type="ProteomicsDB" id="291386"/>
<dbReference type="Antibodypedia" id="4302">
    <property type="antibodies" value="279 antibodies from 34 providers"/>
</dbReference>
<dbReference type="DNASU" id="80879"/>
<dbReference type="Ensembl" id="ENSMUST00000070653.13">
    <property type="protein sequence ID" value="ENSMUSP00000068854.7"/>
    <property type="gene ID" value="ENSMUSG00000025161.17"/>
</dbReference>
<dbReference type="Ensembl" id="ENSMUST00000100130.10">
    <property type="protein sequence ID" value="ENSMUSP00000097706.4"/>
    <property type="gene ID" value="ENSMUSG00000025161.17"/>
</dbReference>
<dbReference type="Ensembl" id="ENSMUST00000168579.8">
    <property type="protein sequence ID" value="ENSMUSP00000125846.2"/>
    <property type="gene ID" value="ENSMUSG00000025161.17"/>
</dbReference>
<dbReference type="GeneID" id="80879"/>
<dbReference type="KEGG" id="mmu:80879"/>
<dbReference type="UCSC" id="uc007muw.1">
    <property type="organism name" value="mouse"/>
</dbReference>
<dbReference type="AGR" id="MGI:1933438"/>
<dbReference type="CTD" id="9123"/>
<dbReference type="MGI" id="MGI:1933438">
    <property type="gene designation" value="Slc16a3"/>
</dbReference>
<dbReference type="VEuPathDB" id="HostDB:ENSMUSG00000025161"/>
<dbReference type="eggNOG" id="KOG2504">
    <property type="taxonomic scope" value="Eukaryota"/>
</dbReference>
<dbReference type="GeneTree" id="ENSGT00940000158181"/>
<dbReference type="HOGENOM" id="CLU_001265_59_1_1"/>
<dbReference type="InParanoid" id="P57787"/>
<dbReference type="OMA" id="NWAVTRI"/>
<dbReference type="OrthoDB" id="6499973at2759"/>
<dbReference type="PhylomeDB" id="P57787"/>
<dbReference type="TreeFam" id="TF313792"/>
<dbReference type="Reactome" id="R-MMU-210991">
    <property type="pathway name" value="Basigin interactions"/>
</dbReference>
<dbReference type="Reactome" id="R-MMU-433692">
    <property type="pathway name" value="Proton-coupled monocarboxylate transport"/>
</dbReference>
<dbReference type="BioGRID-ORCS" id="80879">
    <property type="hits" value="1 hit in 81 CRISPR screens"/>
</dbReference>
<dbReference type="PRO" id="PR:P57787"/>
<dbReference type="Proteomes" id="UP000000589">
    <property type="component" value="Chromosome 11"/>
</dbReference>
<dbReference type="RNAct" id="P57787">
    <property type="molecule type" value="protein"/>
</dbReference>
<dbReference type="Bgee" id="ENSMUSG00000025161">
    <property type="expression patterns" value="Expressed in hindlimb stylopod muscle and 151 other cell types or tissues"/>
</dbReference>
<dbReference type="ExpressionAtlas" id="P57787">
    <property type="expression patterns" value="baseline and differential"/>
</dbReference>
<dbReference type="GO" id="GO:0016324">
    <property type="term" value="C:apical plasma membrane"/>
    <property type="evidence" value="ECO:0007669"/>
    <property type="project" value="Ensembl"/>
</dbReference>
<dbReference type="GO" id="GO:0016323">
    <property type="term" value="C:basolateral plasma membrane"/>
    <property type="evidence" value="ECO:0000250"/>
    <property type="project" value="UniProtKB"/>
</dbReference>
<dbReference type="GO" id="GO:0016328">
    <property type="term" value="C:lateral plasma membrane"/>
    <property type="evidence" value="ECO:0007669"/>
    <property type="project" value="Ensembl"/>
</dbReference>
<dbReference type="GO" id="GO:0031965">
    <property type="term" value="C:nuclear membrane"/>
    <property type="evidence" value="ECO:0007669"/>
    <property type="project" value="Ensembl"/>
</dbReference>
<dbReference type="GO" id="GO:0005886">
    <property type="term" value="C:plasma membrane"/>
    <property type="evidence" value="ECO:0000314"/>
    <property type="project" value="MGI"/>
</dbReference>
<dbReference type="GO" id="GO:0015129">
    <property type="term" value="F:lactate transmembrane transporter activity"/>
    <property type="evidence" value="ECO:0000315"/>
    <property type="project" value="MGI"/>
</dbReference>
<dbReference type="GO" id="GO:0015650">
    <property type="term" value="F:lactate:proton symporter activity"/>
    <property type="evidence" value="ECO:0000250"/>
    <property type="project" value="UniProtKB"/>
</dbReference>
<dbReference type="GO" id="GO:0050833">
    <property type="term" value="F:pyruvate transmembrane transporter activity"/>
    <property type="evidence" value="ECO:0000250"/>
    <property type="project" value="UniProtKB"/>
</dbReference>
<dbReference type="GO" id="GO:0035873">
    <property type="term" value="P:lactate transmembrane transport"/>
    <property type="evidence" value="ECO:0000250"/>
    <property type="project" value="UniProtKB"/>
</dbReference>
<dbReference type="GO" id="GO:0035879">
    <property type="term" value="P:plasma membrane lactate transport"/>
    <property type="evidence" value="ECO:0007669"/>
    <property type="project" value="Ensembl"/>
</dbReference>
<dbReference type="GO" id="GO:0042867">
    <property type="term" value="P:pyruvate catabolic process"/>
    <property type="evidence" value="ECO:0000315"/>
    <property type="project" value="MGI"/>
</dbReference>
<dbReference type="GO" id="GO:1901475">
    <property type="term" value="P:pyruvate transmembrane transport"/>
    <property type="evidence" value="ECO:0000250"/>
    <property type="project" value="UniProtKB"/>
</dbReference>
<dbReference type="CDD" id="cd17430">
    <property type="entry name" value="MFS_MCT3_4"/>
    <property type="match status" value="1"/>
</dbReference>
<dbReference type="FunFam" id="1.20.1250.20:FF:000077">
    <property type="entry name" value="Proton-coupled monocarboxylate transporter 3"/>
    <property type="match status" value="1"/>
</dbReference>
<dbReference type="Gene3D" id="1.20.1250.20">
    <property type="entry name" value="MFS general substrate transporter like domains"/>
    <property type="match status" value="1"/>
</dbReference>
<dbReference type="InterPro" id="IPR004743">
    <property type="entry name" value="MCT"/>
</dbReference>
<dbReference type="InterPro" id="IPR011701">
    <property type="entry name" value="MFS"/>
</dbReference>
<dbReference type="InterPro" id="IPR020846">
    <property type="entry name" value="MFS_dom"/>
</dbReference>
<dbReference type="InterPro" id="IPR036259">
    <property type="entry name" value="MFS_trans_sf"/>
</dbReference>
<dbReference type="InterPro" id="IPR050327">
    <property type="entry name" value="Proton-linked_MCT"/>
</dbReference>
<dbReference type="NCBIfam" id="TIGR00892">
    <property type="entry name" value="2A0113"/>
    <property type="match status" value="1"/>
</dbReference>
<dbReference type="PANTHER" id="PTHR11360">
    <property type="entry name" value="MONOCARBOXYLATE TRANSPORTER"/>
    <property type="match status" value="1"/>
</dbReference>
<dbReference type="PANTHER" id="PTHR11360:SF27">
    <property type="entry name" value="MONOCARBOXYLATE TRANSPORTER 4"/>
    <property type="match status" value="1"/>
</dbReference>
<dbReference type="Pfam" id="PF07690">
    <property type="entry name" value="MFS_1"/>
    <property type="match status" value="1"/>
</dbReference>
<dbReference type="SUPFAM" id="SSF103473">
    <property type="entry name" value="MFS general substrate transporter"/>
    <property type="match status" value="1"/>
</dbReference>
<dbReference type="PROSITE" id="PS50850">
    <property type="entry name" value="MFS"/>
    <property type="match status" value="1"/>
</dbReference>
<feature type="chain" id="PRO_0000211395" description="Monocarboxylate transporter 4">
    <location>
        <begin position="1"/>
        <end position="470"/>
    </location>
</feature>
<feature type="topological domain" description="Cytoplasmic" evidence="2">
    <location>
        <begin position="1"/>
        <end position="17"/>
    </location>
</feature>
<feature type="transmembrane region" description="Helical" evidence="2">
    <location>
        <begin position="18"/>
        <end position="38"/>
    </location>
</feature>
<feature type="topological domain" description="Extracellular" evidence="2">
    <location>
        <begin position="39"/>
        <end position="61"/>
    </location>
</feature>
<feature type="transmembrane region" description="Helical" evidence="2">
    <location>
        <begin position="62"/>
        <end position="82"/>
    </location>
</feature>
<feature type="topological domain" description="Cytoplasmic" evidence="2">
    <location>
        <begin position="83"/>
        <end position="84"/>
    </location>
</feature>
<feature type="transmembrane region" description="Helical" evidence="2">
    <location>
        <begin position="85"/>
        <end position="105"/>
    </location>
</feature>
<feature type="topological domain" description="Extracellular" evidence="2">
    <location>
        <begin position="106"/>
        <end position="109"/>
    </location>
</feature>
<feature type="transmembrane region" description="Helical" evidence="2">
    <location>
        <begin position="110"/>
        <end position="130"/>
    </location>
</feature>
<feature type="topological domain" description="Cytoplasmic" evidence="2">
    <location>
        <begin position="131"/>
        <end position="149"/>
    </location>
</feature>
<feature type="transmembrane region" description="Helical" evidence="2">
    <location>
        <begin position="150"/>
        <end position="170"/>
    </location>
</feature>
<feature type="topological domain" description="Extracellular" evidence="2">
    <location>
        <begin position="171"/>
        <end position="179"/>
    </location>
</feature>
<feature type="transmembrane region" description="Helical" evidence="2">
    <location>
        <begin position="180"/>
        <end position="200"/>
    </location>
</feature>
<feature type="topological domain" description="Cytoplasmic" evidence="2">
    <location>
        <begin position="201"/>
        <end position="231"/>
    </location>
</feature>
<feature type="transmembrane region" description="Helical" evidence="2">
    <location>
        <begin position="232"/>
        <end position="252"/>
    </location>
</feature>
<feature type="topological domain" description="Extracellular" evidence="2">
    <location>
        <begin position="253"/>
        <end position="267"/>
    </location>
</feature>
<feature type="transmembrane region" description="Helical" evidence="2">
    <location>
        <begin position="268"/>
        <end position="288"/>
    </location>
</feature>
<feature type="topological domain" description="Cytoplasmic" evidence="2">
    <location>
        <begin position="289"/>
        <end position="298"/>
    </location>
</feature>
<feature type="transmembrane region" description="Helical" evidence="2">
    <location>
        <begin position="299"/>
        <end position="319"/>
    </location>
</feature>
<feature type="topological domain" description="Extracellular" evidence="2">
    <location>
        <begin position="320"/>
        <end position="321"/>
    </location>
</feature>
<feature type="transmembrane region" description="Helical" evidence="2">
    <location>
        <begin position="322"/>
        <end position="342"/>
    </location>
</feature>
<feature type="topological domain" description="Cytoplasmic" evidence="2">
    <location>
        <begin position="343"/>
        <end position="355"/>
    </location>
</feature>
<feature type="transmembrane region" description="Helical" evidence="2">
    <location>
        <begin position="356"/>
        <end position="376"/>
    </location>
</feature>
<feature type="topological domain" description="Extracellular" evidence="2">
    <location>
        <begin position="377"/>
        <end position="391"/>
    </location>
</feature>
<feature type="transmembrane region" description="Helical" evidence="2">
    <location>
        <begin position="392"/>
        <end position="412"/>
    </location>
</feature>
<feature type="topological domain" description="Cytoplasmic" evidence="2">
    <location>
        <begin position="413"/>
        <end position="470"/>
    </location>
</feature>
<feature type="region of interest" description="Basolateral sorting signal" evidence="1">
    <location>
        <begin position="429"/>
        <end position="446"/>
    </location>
</feature>
<feature type="region of interest" description="Basolateral sorting signal" evidence="1">
    <location>
        <begin position="446"/>
        <end position="470"/>
    </location>
</feature>
<feature type="modified residue" description="Phosphoserine" evidence="6">
    <location>
        <position position="430"/>
    </location>
</feature>
<feature type="modified residue" description="Phosphothreonine" evidence="1">
    <location>
        <position position="465"/>
    </location>
</feature>
<feature type="modified residue" description="Phosphoserine" evidence="1">
    <location>
        <position position="469"/>
    </location>
</feature>
<accession>P57787</accession>
<accession>Q9ES80</accession>
<accession>Q9ESF8</accession>
<gene>
    <name type="primary">Slc16a3</name>
    <name type="synonym">Mct4</name>
</gene>
<reference key="1">
    <citation type="submission" date="1999-08" db="EMBL/GenBank/DDBJ databases">
        <title>Cloning and expression of mouse MCT3 and MCT4.</title>
        <authorList>
            <person name="Yoon H."/>
            <person name="Philp N.J."/>
        </authorList>
    </citation>
    <scope>NUCLEOTIDE SEQUENCE [GENOMIC DNA / MRNA]</scope>
    <source>
        <strain>C3H/HeJ</strain>
        <tissue>Skeletal muscle</tissue>
    </source>
</reference>
<reference key="2">
    <citation type="journal article" date="2004" name="Genome Res.">
        <title>The status, quality, and expansion of the NIH full-length cDNA project: the Mammalian Gene Collection (MGC).</title>
        <authorList>
            <consortium name="The MGC Project Team"/>
        </authorList>
    </citation>
    <scope>NUCLEOTIDE SEQUENCE [LARGE SCALE MRNA]</scope>
    <source>
        <strain>129</strain>
        <tissue>Mammary gland</tissue>
    </source>
</reference>
<reference key="3">
    <citation type="journal article" date="2009" name="Immunity">
        <title>The phagosomal proteome in interferon-gamma-activated macrophages.</title>
        <authorList>
            <person name="Trost M."/>
            <person name="English L."/>
            <person name="Lemieux S."/>
            <person name="Courcelles M."/>
            <person name="Desjardins M."/>
            <person name="Thibault P."/>
        </authorList>
    </citation>
    <scope>PHOSPHORYLATION [LARGE SCALE ANALYSIS] AT SER-430</scope>
    <scope>IDENTIFICATION BY MASS SPECTROMETRY [LARGE SCALE ANALYSIS]</scope>
</reference>
<reference key="4">
    <citation type="journal article" date="2019" name="IScience">
        <title>New insights into the lactate shuttle: role of MCT4 in the modulation of the exercise capacity.</title>
        <authorList>
            <person name="Bisetto S."/>
            <person name="Wright M.C."/>
            <person name="Nowak R.A."/>
            <person name="Lepore A.C."/>
            <person name="Khurana T.S."/>
            <person name="Loro E."/>
            <person name="Philp N.J."/>
        </authorList>
    </citation>
    <scope>DISRUPTION PHENOTYPE</scope>
    <scope>FUNCTION</scope>
    <scope>TISSUE SPECIFICITY</scope>
</reference>
<sequence>MGGAVVDEGPTGIKAPDGGWGWAVLFGCFIITGFSYAFPKAVSVFFKELMHEFGIGYSDTAWISSILLAMLYGTGPLCSVCVNRFGCRPVMLVGGLFASLGMVAASFCRSIIQIYLTTGVITGLGLALNFQPSLIMLNRYFNKRRPIANGLAAAGSPVFLCALSPLGQLLQDHYGWRGGFLILGGLLLNCCVCAALMRPLVAPQVGGGTEPRGPQRPPQRLLDLSVFRDRGFLIYAVAASIMVLGLFVPPVFVVSYAKDMGVPDTKAAFLLTILGFIDIFARPTAGFITGLKKVRPYSVYLFSFAMFFNGFTDLTGSTATDYGGLVVFCIFFGISYGMVGALQFEVLMAIVGTQKFSSAIGLVLLLEAVAVLIGPPSGGKLLDATKVYKYVFILAGAEVLTSSLVLLLGNFFCIGKRKRPEVTEPEEVASEEKLHKPPVDVGVDSREVEHFLKAEPEKNGEVVHTPETSV</sequence>
<comment type="function">
    <text evidence="1 5">Proton-dependent transporter of monocarboxylates such as L-lactate and pyruvate (By similarity). Plays a predominant role in the L-lactate efflux from highly glycolytic cells (Probable).</text>
</comment>
<comment type="catalytic activity">
    <reaction evidence="1">
        <text>(S)-lactate(in) + H(+)(in) = (S)-lactate(out) + H(+)(out)</text>
        <dbReference type="Rhea" id="RHEA:29415"/>
        <dbReference type="ChEBI" id="CHEBI:15378"/>
        <dbReference type="ChEBI" id="CHEBI:16651"/>
    </reaction>
    <physiologicalReaction direction="left-to-right" evidence="1">
        <dbReference type="Rhea" id="RHEA:29416"/>
    </physiologicalReaction>
    <physiologicalReaction direction="right-to-left" evidence="1">
        <dbReference type="Rhea" id="RHEA:29417"/>
    </physiologicalReaction>
</comment>
<comment type="catalytic activity">
    <reaction evidence="1">
        <text>pyruvate(out) + H(+)(out) = pyruvate(in) + H(+)(in)</text>
        <dbReference type="Rhea" id="RHEA:64720"/>
        <dbReference type="ChEBI" id="CHEBI:15361"/>
        <dbReference type="ChEBI" id="CHEBI:15378"/>
    </reaction>
</comment>
<comment type="subunit">
    <text evidence="1">Interacts with BSG; interaction mediates SLC16A3 targeting to the plasma membrane.</text>
</comment>
<comment type="subcellular location">
    <subcellularLocation>
        <location evidence="1">Cell membrane</location>
        <topology evidence="2">Multi-pass membrane protein</topology>
    </subcellularLocation>
    <subcellularLocation>
        <location evidence="1">Basolateral cell membrane</location>
        <topology evidence="2">Multi-pass membrane protein</topology>
    </subcellularLocation>
    <text evidence="1">Plasma membrane localization is dependent upon the BSG/MCT4 interaction. Basolateral sorting signals (BLSS) in C-terminal cytoplasmic tail ensure its basolateral expression in polarised epithelial cells.</text>
</comment>
<comment type="domain">
    <text evidence="1">Two basolateral sorting signals (BSS) in its C-terminal cytoplasmic tail are required to direct SLC16A3 to the basolateral membrane.</text>
</comment>
<comment type="disruption phenotype">
    <text evidence="3">Deficient mice are born at normal Mendelian ratio, with no apparent defects at birth. However mice exhibit impaired exercise endurance with abnormal neuromuscular junctions innervation and lower compound muscle action potential amplitude.</text>
</comment>
<comment type="similarity">
    <text evidence="4">Belongs to the major facilitator superfamily. Monocarboxylate porter (TC 2.A.1.13) family.</text>
</comment>
<comment type="caution">
    <text evidence="1">Was initially thought to be considered to be a low affinity lactate transporter with negligible affinity for pyruvate (By similarity). However, it was later shown that SLC16A3 is a high affinity lactate transporter with physiologically relevant affinity for pyruvate (By similarity).</text>
</comment>
<keyword id="KW-1003">Cell membrane</keyword>
<keyword id="KW-0472">Membrane</keyword>
<keyword id="KW-0597">Phosphoprotein</keyword>
<keyword id="KW-1185">Reference proteome</keyword>
<keyword id="KW-0769">Symport</keyword>
<keyword id="KW-0812">Transmembrane</keyword>
<keyword id="KW-1133">Transmembrane helix</keyword>
<keyword id="KW-0813">Transport</keyword>